<name>KTAP2_BOVIN</name>
<keyword id="KW-0256">Endoplasmic reticulum</keyword>
<keyword id="KW-0472">Membrane</keyword>
<keyword id="KW-0597">Phosphoprotein</keyword>
<keyword id="KW-1185">Reference proteome</keyword>
<keyword id="KW-0812">Transmembrane</keyword>
<keyword id="KW-1133">Transmembrane helix</keyword>
<feature type="chain" id="PRO_0000370222" description="Dolichyl-diphosphooligosaccharide--protein glycosyltransferase subunit KCP2">
    <location>
        <begin position="1"/>
        <end position="136"/>
    </location>
</feature>
<feature type="topological domain" description="Lumenal" evidence="2">
    <location>
        <begin position="1"/>
        <end position="5"/>
    </location>
</feature>
<feature type="transmembrane region" description="Helical" evidence="2">
    <location>
        <begin position="6"/>
        <end position="23"/>
    </location>
</feature>
<feature type="topological domain" description="Cytoplasmic" evidence="2">
    <location>
        <begin position="24"/>
        <end position="34"/>
    </location>
</feature>
<feature type="transmembrane region" description="Helical" evidence="2">
    <location>
        <begin position="35"/>
        <end position="55"/>
    </location>
</feature>
<feature type="topological domain" description="Lumenal" evidence="2">
    <location>
        <begin position="56"/>
        <end position="75"/>
    </location>
</feature>
<feature type="transmembrane region" description="Helical" evidence="2">
    <location>
        <begin position="76"/>
        <end position="108"/>
    </location>
</feature>
<feature type="topological domain" description="Cytoplasmic" evidence="2">
    <location>
        <begin position="109"/>
        <end position="136"/>
    </location>
</feature>
<feature type="short sequence motif" description="Prevents secretion from ER" evidence="2">
    <location>
        <begin position="133"/>
        <end position="136"/>
    </location>
</feature>
<feature type="modified residue" description="Phosphothreonine" evidence="1">
    <location>
        <position position="124"/>
    </location>
</feature>
<gene>
    <name type="primary">KRTCAP2</name>
</gene>
<reference key="1">
    <citation type="submission" date="2007-07" db="EMBL/GenBank/DDBJ databases">
        <authorList>
            <consortium name="NIH - Mammalian Gene Collection (MGC) project"/>
        </authorList>
    </citation>
    <scope>NUCLEOTIDE SEQUENCE [LARGE SCALE MRNA]</scope>
    <source>
        <strain>Hereford</strain>
        <tissue>Testis</tissue>
    </source>
</reference>
<evidence type="ECO:0000250" key="1">
    <source>
        <dbReference type="UniProtKB" id="Q8N6L1"/>
    </source>
</evidence>
<evidence type="ECO:0000255" key="2"/>
<evidence type="ECO:0000305" key="3"/>
<accession>A6QQ59</accession>
<dbReference type="EMBL" id="BC149659">
    <property type="protein sequence ID" value="AAI49660.1"/>
    <property type="molecule type" value="mRNA"/>
</dbReference>
<dbReference type="RefSeq" id="NP_001094679.1">
    <property type="nucleotide sequence ID" value="NM_001101209.2"/>
</dbReference>
<dbReference type="FunCoup" id="A6QQ59">
    <property type="interactions" value="945"/>
</dbReference>
<dbReference type="STRING" id="9913.ENSBTAP00000014035"/>
<dbReference type="PaxDb" id="9913-ENSBTAP00000014035"/>
<dbReference type="Ensembl" id="ENSBTAT00000014035.6">
    <property type="protein sequence ID" value="ENSBTAP00000014035.6"/>
    <property type="gene ID" value="ENSBTAG00000010617.6"/>
</dbReference>
<dbReference type="GeneID" id="540389"/>
<dbReference type="KEGG" id="bta:540389"/>
<dbReference type="CTD" id="200185"/>
<dbReference type="VEuPathDB" id="HostDB:ENSBTAG00000010617"/>
<dbReference type="VGNC" id="VGNC:30751">
    <property type="gene designation" value="KRTCAP2"/>
</dbReference>
<dbReference type="eggNOG" id="KOG4615">
    <property type="taxonomic scope" value="Eukaryota"/>
</dbReference>
<dbReference type="GeneTree" id="ENSGT00390000003552"/>
<dbReference type="HOGENOM" id="CLU_109648_2_0_1"/>
<dbReference type="InParanoid" id="A6QQ59"/>
<dbReference type="OMA" id="ITIYYMN"/>
<dbReference type="OrthoDB" id="1111004at2759"/>
<dbReference type="TreeFam" id="TF324347"/>
<dbReference type="UniPathway" id="UPA00378"/>
<dbReference type="Proteomes" id="UP000009136">
    <property type="component" value="Chromosome 3"/>
</dbReference>
<dbReference type="Bgee" id="ENSBTAG00000010617">
    <property type="expression patterns" value="Expressed in caput epididymis and 105 other cell types or tissues"/>
</dbReference>
<dbReference type="GO" id="GO:0005789">
    <property type="term" value="C:endoplasmic reticulum membrane"/>
    <property type="evidence" value="ECO:0007669"/>
    <property type="project" value="UniProtKB-SubCell"/>
</dbReference>
<dbReference type="GO" id="GO:0006487">
    <property type="term" value="P:protein N-linked glycosylation"/>
    <property type="evidence" value="ECO:0000318"/>
    <property type="project" value="GO_Central"/>
</dbReference>
<dbReference type="InterPro" id="IPR018614">
    <property type="entry name" value="KRTCAP2"/>
</dbReference>
<dbReference type="PANTHER" id="PTHR32001">
    <property type="entry name" value="KERATINOCYTE-ASSOCIATED PROTEIN 2"/>
    <property type="match status" value="1"/>
</dbReference>
<dbReference type="PANTHER" id="PTHR32001:SF1">
    <property type="entry name" value="KERATINOCYTE-ASSOCIATED PROTEIN 2"/>
    <property type="match status" value="1"/>
</dbReference>
<dbReference type="Pfam" id="PF09775">
    <property type="entry name" value="Keratin_assoc"/>
    <property type="match status" value="1"/>
</dbReference>
<comment type="function">
    <text evidence="1">Subunit of STT3A-containing oligosaccharyl transferase (OST-A) complex that catalyzes the initial transfer of a defined glycan (Glc(3)Man(9)GlcNAc(2) in eukaryotes) from the lipid carrier dolichol-pyrophosphate to an asparagine residue within an Asn-X-Ser/Thr consensus motif in nascent polypeptide chains, the first step in protein N-glycosylation. N-glycosylation occurs cotranslationally and the complex associates with the Sec61 complex at the channel-forming translocon complex that mediates protein translocation across the endoplasmic reticulum (ER). Within the OST-A complex, acts as an adapter that anchors the OST-A complex to the Sec61 complex. May be involved in N-glycosylation of APP (amyloid-beta precursor protein). Can modulate gamma-secretase cleavage of APP by enhancing endoprotelysis of PSEN1.</text>
</comment>
<comment type="pathway">
    <text evidence="1">Protein modification; protein glycosylation.</text>
</comment>
<comment type="subunit">
    <text evidence="1">Component of STT3A-containing oligosaccharyl transferase (OST-A) complex. STT3A-containing complex assembly occurs through the formation of 3 subcomplexes. Subcomplex 1 contains RPN1 and TMEM258, subcomplex 2 contains the STT3A-specific subunits STT3A, DC2/OSTC, and KCP2 as well as the core subunit OST4, and subcomplex 3 contains RPN2, DAD1, and OST48. The OST-A complex can form stable complexes with the Sec61 complex or with both the Sec61 and TRAP complexes. Interacts with PSEN1 and NCSTN; indicative for an association with the gamma-secretase complex.</text>
</comment>
<comment type="subcellular location">
    <subcellularLocation>
        <location evidence="1">Endoplasmic reticulum membrane</location>
        <topology evidence="1">Multi-pass membrane protein</topology>
    </subcellularLocation>
</comment>
<comment type="similarity">
    <text evidence="3">Belongs to the KRTCAP2 family.</text>
</comment>
<organism>
    <name type="scientific">Bos taurus</name>
    <name type="common">Bovine</name>
    <dbReference type="NCBI Taxonomy" id="9913"/>
    <lineage>
        <taxon>Eukaryota</taxon>
        <taxon>Metazoa</taxon>
        <taxon>Chordata</taxon>
        <taxon>Craniata</taxon>
        <taxon>Vertebrata</taxon>
        <taxon>Euteleostomi</taxon>
        <taxon>Mammalia</taxon>
        <taxon>Eutheria</taxon>
        <taxon>Laurasiatheria</taxon>
        <taxon>Artiodactyla</taxon>
        <taxon>Ruminantia</taxon>
        <taxon>Pecora</taxon>
        <taxon>Bovidae</taxon>
        <taxon>Bovinae</taxon>
        <taxon>Bos</taxon>
    </lineage>
</organism>
<sequence length="136" mass="14679">MVVGTGTSLALSSLLSLLLFAGMQMYSRQLASTEWLTIQGGLLGSGLFVFSLTAFNNLENLVFGKGFQAKIFPEILLCLLLALFASGLIHRVCVTTCFIFSMVGLYYINKISSTLYQATAPVLTPAKVTGKGKKRN</sequence>
<protein>
    <recommendedName>
        <fullName>Dolichyl-diphosphooligosaccharide--protein glycosyltransferase subunit KCP2</fullName>
        <shortName>Oligosaccharyl transferase subunit KCP2</shortName>
    </recommendedName>
    <alternativeName>
        <fullName>Keratinocyte-associated protein 2</fullName>
        <shortName>KCP-2</shortName>
    </alternativeName>
</protein>
<proteinExistence type="evidence at transcript level"/>